<dbReference type="EC" id="6.1.1.2" evidence="1"/>
<dbReference type="EMBL" id="BA000033">
    <property type="protein sequence ID" value="BAB94743.1"/>
    <property type="molecule type" value="Genomic_DNA"/>
</dbReference>
<dbReference type="RefSeq" id="WP_000448934.1">
    <property type="nucleotide sequence ID" value="NC_003923.1"/>
</dbReference>
<dbReference type="SMR" id="P67594"/>
<dbReference type="KEGG" id="sam:MW0878"/>
<dbReference type="HOGENOM" id="CLU_029244_1_1_9"/>
<dbReference type="GO" id="GO:0005829">
    <property type="term" value="C:cytosol"/>
    <property type="evidence" value="ECO:0007669"/>
    <property type="project" value="TreeGrafter"/>
</dbReference>
<dbReference type="GO" id="GO:0005524">
    <property type="term" value="F:ATP binding"/>
    <property type="evidence" value="ECO:0007669"/>
    <property type="project" value="UniProtKB-UniRule"/>
</dbReference>
<dbReference type="GO" id="GO:0004830">
    <property type="term" value="F:tryptophan-tRNA ligase activity"/>
    <property type="evidence" value="ECO:0007669"/>
    <property type="project" value="UniProtKB-UniRule"/>
</dbReference>
<dbReference type="GO" id="GO:0006436">
    <property type="term" value="P:tryptophanyl-tRNA aminoacylation"/>
    <property type="evidence" value="ECO:0007669"/>
    <property type="project" value="UniProtKB-UniRule"/>
</dbReference>
<dbReference type="CDD" id="cd00806">
    <property type="entry name" value="TrpRS_core"/>
    <property type="match status" value="1"/>
</dbReference>
<dbReference type="FunFam" id="1.10.240.10:FF:000002">
    <property type="entry name" value="Tryptophan--tRNA ligase"/>
    <property type="match status" value="1"/>
</dbReference>
<dbReference type="Gene3D" id="3.40.50.620">
    <property type="entry name" value="HUPs"/>
    <property type="match status" value="1"/>
</dbReference>
<dbReference type="Gene3D" id="1.10.240.10">
    <property type="entry name" value="Tyrosyl-Transfer RNA Synthetase"/>
    <property type="match status" value="1"/>
</dbReference>
<dbReference type="HAMAP" id="MF_00140_B">
    <property type="entry name" value="Trp_tRNA_synth_B"/>
    <property type="match status" value="1"/>
</dbReference>
<dbReference type="InterPro" id="IPR001412">
    <property type="entry name" value="aa-tRNA-synth_I_CS"/>
</dbReference>
<dbReference type="InterPro" id="IPR002305">
    <property type="entry name" value="aa-tRNA-synth_Ic"/>
</dbReference>
<dbReference type="InterPro" id="IPR014729">
    <property type="entry name" value="Rossmann-like_a/b/a_fold"/>
</dbReference>
<dbReference type="InterPro" id="IPR002306">
    <property type="entry name" value="Trp-tRNA-ligase"/>
</dbReference>
<dbReference type="InterPro" id="IPR024109">
    <property type="entry name" value="Trp-tRNA-ligase_bac-type"/>
</dbReference>
<dbReference type="InterPro" id="IPR050203">
    <property type="entry name" value="Trp-tRNA_synthetase"/>
</dbReference>
<dbReference type="NCBIfam" id="TIGR00233">
    <property type="entry name" value="trpS"/>
    <property type="match status" value="1"/>
</dbReference>
<dbReference type="PANTHER" id="PTHR43766">
    <property type="entry name" value="TRYPTOPHAN--TRNA LIGASE, MITOCHONDRIAL"/>
    <property type="match status" value="1"/>
</dbReference>
<dbReference type="PANTHER" id="PTHR43766:SF1">
    <property type="entry name" value="TRYPTOPHAN--TRNA LIGASE, MITOCHONDRIAL"/>
    <property type="match status" value="1"/>
</dbReference>
<dbReference type="Pfam" id="PF00579">
    <property type="entry name" value="tRNA-synt_1b"/>
    <property type="match status" value="1"/>
</dbReference>
<dbReference type="PRINTS" id="PR01039">
    <property type="entry name" value="TRNASYNTHTRP"/>
</dbReference>
<dbReference type="SUPFAM" id="SSF52374">
    <property type="entry name" value="Nucleotidylyl transferase"/>
    <property type="match status" value="1"/>
</dbReference>
<dbReference type="PROSITE" id="PS00178">
    <property type="entry name" value="AA_TRNA_LIGASE_I"/>
    <property type="match status" value="1"/>
</dbReference>
<keyword id="KW-0030">Aminoacyl-tRNA synthetase</keyword>
<keyword id="KW-0067">ATP-binding</keyword>
<keyword id="KW-0963">Cytoplasm</keyword>
<keyword id="KW-0436">Ligase</keyword>
<keyword id="KW-0547">Nucleotide-binding</keyword>
<keyword id="KW-0648">Protein biosynthesis</keyword>
<comment type="function">
    <text evidence="1">Catalyzes the attachment of tryptophan to tRNA(Trp).</text>
</comment>
<comment type="catalytic activity">
    <reaction evidence="1">
        <text>tRNA(Trp) + L-tryptophan + ATP = L-tryptophyl-tRNA(Trp) + AMP + diphosphate + H(+)</text>
        <dbReference type="Rhea" id="RHEA:24080"/>
        <dbReference type="Rhea" id="RHEA-COMP:9671"/>
        <dbReference type="Rhea" id="RHEA-COMP:9705"/>
        <dbReference type="ChEBI" id="CHEBI:15378"/>
        <dbReference type="ChEBI" id="CHEBI:30616"/>
        <dbReference type="ChEBI" id="CHEBI:33019"/>
        <dbReference type="ChEBI" id="CHEBI:57912"/>
        <dbReference type="ChEBI" id="CHEBI:78442"/>
        <dbReference type="ChEBI" id="CHEBI:78535"/>
        <dbReference type="ChEBI" id="CHEBI:456215"/>
        <dbReference type="EC" id="6.1.1.2"/>
    </reaction>
</comment>
<comment type="subunit">
    <text evidence="1">Homodimer.</text>
</comment>
<comment type="subcellular location">
    <subcellularLocation>
        <location evidence="1">Cytoplasm</location>
    </subcellularLocation>
</comment>
<comment type="similarity">
    <text evidence="1">Belongs to the class-I aminoacyl-tRNA synthetase family.</text>
</comment>
<protein>
    <recommendedName>
        <fullName evidence="1">Tryptophan--tRNA ligase</fullName>
        <ecNumber evidence="1">6.1.1.2</ecNumber>
    </recommendedName>
    <alternativeName>
        <fullName evidence="1">Tryptophanyl-tRNA synthetase</fullName>
        <shortName evidence="1">TrpRS</shortName>
    </alternativeName>
</protein>
<sequence>METLFSGIQPSGIPTIGNYIGALKQFVDVQNDYDCYFCIVDQHAITMPQDRLKLRKQTRQLAAIYLASGIDPDKATLFIQSEVPAHVQAGWMLTTIASVGELERMTQYKDKAQKAVEGIPAGLLTYPPLMAADIVLYNTNIVPVGDDQKQHIELTRNLVDRFNSRYNDVLVKPEIRMPKVGGRVMSLQDPTRKMSKSDDNAKNFISLLDEPNVAAKKIKSAVTDSDGIIKFDRDNKPGITNLISIYAGLTDMPIKDIEAKYEGEGYGKFKGDLAEIVKAFLVEFQEKYESFYNSDKLDDILDQGRDKAHKVSFKTVKKMEKAMGLGRKR</sequence>
<proteinExistence type="inferred from homology"/>
<feature type="chain" id="PRO_0000136680" description="Tryptophan--tRNA ligase">
    <location>
        <begin position="1"/>
        <end position="329"/>
    </location>
</feature>
<feature type="short sequence motif" description="'HIGH' region" evidence="1">
    <location>
        <begin position="10"/>
        <end position="18"/>
    </location>
</feature>
<feature type="short sequence motif" description="'KMSKS' region" evidence="1">
    <location>
        <begin position="193"/>
        <end position="197"/>
    </location>
</feature>
<feature type="binding site" evidence="1">
    <location>
        <begin position="9"/>
        <end position="11"/>
    </location>
    <ligand>
        <name>ATP</name>
        <dbReference type="ChEBI" id="CHEBI:30616"/>
    </ligand>
</feature>
<feature type="binding site" evidence="1">
    <location>
        <begin position="17"/>
        <end position="18"/>
    </location>
    <ligand>
        <name>ATP</name>
        <dbReference type="ChEBI" id="CHEBI:30616"/>
    </ligand>
</feature>
<feature type="binding site" evidence="1">
    <location>
        <position position="133"/>
    </location>
    <ligand>
        <name>L-tryptophan</name>
        <dbReference type="ChEBI" id="CHEBI:57912"/>
    </ligand>
</feature>
<feature type="binding site" evidence="1">
    <location>
        <begin position="145"/>
        <end position="147"/>
    </location>
    <ligand>
        <name>ATP</name>
        <dbReference type="ChEBI" id="CHEBI:30616"/>
    </ligand>
</feature>
<feature type="binding site" evidence="1">
    <location>
        <position position="184"/>
    </location>
    <ligand>
        <name>ATP</name>
        <dbReference type="ChEBI" id="CHEBI:30616"/>
    </ligand>
</feature>
<feature type="binding site" evidence="1">
    <location>
        <begin position="193"/>
        <end position="197"/>
    </location>
    <ligand>
        <name>ATP</name>
        <dbReference type="ChEBI" id="CHEBI:30616"/>
    </ligand>
</feature>
<gene>
    <name evidence="1" type="primary">trpS</name>
    <name type="ordered locus">MW0878</name>
</gene>
<name>SYW_STAAW</name>
<accession>P67594</accession>
<accession>Q99V94</accession>
<evidence type="ECO:0000255" key="1">
    <source>
        <dbReference type="HAMAP-Rule" id="MF_00140"/>
    </source>
</evidence>
<reference key="1">
    <citation type="journal article" date="2002" name="Lancet">
        <title>Genome and virulence determinants of high virulence community-acquired MRSA.</title>
        <authorList>
            <person name="Baba T."/>
            <person name="Takeuchi F."/>
            <person name="Kuroda M."/>
            <person name="Yuzawa H."/>
            <person name="Aoki K."/>
            <person name="Oguchi A."/>
            <person name="Nagai Y."/>
            <person name="Iwama N."/>
            <person name="Asano K."/>
            <person name="Naimi T."/>
            <person name="Kuroda H."/>
            <person name="Cui L."/>
            <person name="Yamamoto K."/>
            <person name="Hiramatsu K."/>
        </authorList>
    </citation>
    <scope>NUCLEOTIDE SEQUENCE [LARGE SCALE GENOMIC DNA]</scope>
    <source>
        <strain>MW2</strain>
    </source>
</reference>
<organism>
    <name type="scientific">Staphylococcus aureus (strain MW2)</name>
    <dbReference type="NCBI Taxonomy" id="196620"/>
    <lineage>
        <taxon>Bacteria</taxon>
        <taxon>Bacillati</taxon>
        <taxon>Bacillota</taxon>
        <taxon>Bacilli</taxon>
        <taxon>Bacillales</taxon>
        <taxon>Staphylococcaceae</taxon>
        <taxon>Staphylococcus</taxon>
    </lineage>
</organism>